<proteinExistence type="evidence at transcript level"/>
<accession>L0GCW8</accession>
<keyword id="KW-1015">Disulfide bond</keyword>
<keyword id="KW-0964">Secreted</keyword>
<keyword id="KW-0732">Signal</keyword>
<reference key="1">
    <citation type="journal article" date="2013" name="Toxicon">
        <title>Characterization of the venom from the Australian scorpion Urodacus yaschenkoi: molecular mass analysis of components, cDNA sequences and peptides with antimicrobial activity.</title>
        <authorList>
            <person name="Luna-Ramirez K."/>
            <person name="Quintero-Hernandez V."/>
            <person name="Vargas-Jaimes L."/>
            <person name="Batista C.V."/>
            <person name="Winkel K.D."/>
            <person name="Possani L.D."/>
        </authorList>
    </citation>
    <scope>NUCLEOTIDE SEQUENCE [MRNA]</scope>
    <source>
        <tissue>Venom gland</tissue>
    </source>
</reference>
<name>TXUE_UROYA</name>
<feature type="signal peptide" evidence="2">
    <location>
        <begin position="1"/>
        <end position="25"/>
    </location>
</feature>
<feature type="chain" id="PRO_5001091950" description="Toxin-like protein 14">
    <location>
        <begin position="26"/>
        <end position="104"/>
    </location>
</feature>
<evidence type="ECO:0000250" key="1"/>
<evidence type="ECO:0000255" key="2"/>
<evidence type="ECO:0000305" key="3"/>
<organism>
    <name type="scientific">Urodacus yaschenkoi</name>
    <name type="common">Inland robust scorpion</name>
    <dbReference type="NCBI Taxonomy" id="1273102"/>
    <lineage>
        <taxon>Eukaryota</taxon>
        <taxon>Metazoa</taxon>
        <taxon>Ecdysozoa</taxon>
        <taxon>Arthropoda</taxon>
        <taxon>Chelicerata</taxon>
        <taxon>Arachnida</taxon>
        <taxon>Scorpiones</taxon>
        <taxon>Iurida</taxon>
        <taxon>Scorpionoidea</taxon>
        <taxon>Scorpionidae</taxon>
        <taxon>Urodacinae</taxon>
        <taxon>Urodacus</taxon>
    </lineage>
</organism>
<dbReference type="EMBL" id="JX274250">
    <property type="protein sequence ID" value="AGA82764.1"/>
    <property type="molecule type" value="mRNA"/>
</dbReference>
<dbReference type="SMR" id="L0GCW8"/>
<dbReference type="GO" id="GO:0005576">
    <property type="term" value="C:extracellular region"/>
    <property type="evidence" value="ECO:0007669"/>
    <property type="project" value="UniProtKB-SubCell"/>
</dbReference>
<dbReference type="InterPro" id="IPR029277">
    <property type="entry name" value="SVWC_dom"/>
</dbReference>
<dbReference type="Pfam" id="PF15430">
    <property type="entry name" value="SVWC"/>
    <property type="match status" value="1"/>
</dbReference>
<dbReference type="SMART" id="SM01318">
    <property type="entry name" value="SVWC"/>
    <property type="match status" value="1"/>
</dbReference>
<comment type="subcellular location">
    <subcellularLocation>
        <location evidence="1">Secreted</location>
    </subcellularLocation>
</comment>
<comment type="tissue specificity">
    <text>Expressed by the venom gland.</text>
</comment>
<comment type="PTM">
    <text evidence="3">Contains 4 disulfide bonds.</text>
</comment>
<protein>
    <recommendedName>
        <fullName>Toxin-like protein 14</fullName>
    </recommendedName>
</protein>
<sequence>MNTYNARLYIFSLALALVILKGTKCYMYVFLQEPGAAFCVDDSGVRYKPGDVWYDDEKCEKLRCSGAEASLKIIGAGCGIIHVVGCETVRGSGHYPNCCPRPKC</sequence>